<comment type="function">
    <text>Light-harvesting photosynthetic bile pigment-protein from the phycobiliprotein complex.</text>
</comment>
<comment type="subunit">
    <text>Heterodimer of an alpha and a beta chain.</text>
</comment>
<comment type="subcellular location">
    <subcellularLocation>
        <location evidence="1">Plastid</location>
        <location evidence="1">Chloroplast thylakoid membrane</location>
        <topology evidence="1">Peripheral membrane protein</topology>
        <orientation evidence="1">Stromal side</orientation>
    </subcellularLocation>
    <text evidence="1">Forms the periphery of the phycobilisome rod.</text>
</comment>
<comment type="PTM">
    <text evidence="1">Contains two covalently linked phycoerythrobilin chromophores and one covalently linked phycourobilin chromophore.</text>
</comment>
<comment type="similarity">
    <text evidence="2">Belongs to the phycobiliprotein family.</text>
</comment>
<name>PHEB_AGLNE</name>
<dbReference type="EMBL" id="Z11907">
    <property type="protein sequence ID" value="CAA77962.1"/>
    <property type="molecule type" value="Genomic_DNA"/>
</dbReference>
<dbReference type="PIR" id="S30941">
    <property type="entry name" value="S30941"/>
</dbReference>
<dbReference type="SMR" id="P28560"/>
<dbReference type="GO" id="GO:0009535">
    <property type="term" value="C:chloroplast thylakoid membrane"/>
    <property type="evidence" value="ECO:0007669"/>
    <property type="project" value="UniProtKB-SubCell"/>
</dbReference>
<dbReference type="GO" id="GO:0030089">
    <property type="term" value="C:phycobilisome"/>
    <property type="evidence" value="ECO:0007669"/>
    <property type="project" value="UniProtKB-KW"/>
</dbReference>
<dbReference type="GO" id="GO:0015979">
    <property type="term" value="P:photosynthesis"/>
    <property type="evidence" value="ECO:0007669"/>
    <property type="project" value="UniProtKB-KW"/>
</dbReference>
<dbReference type="Gene3D" id="1.10.490.20">
    <property type="entry name" value="Phycocyanins"/>
    <property type="match status" value="1"/>
</dbReference>
<dbReference type="InterPro" id="IPR009050">
    <property type="entry name" value="Globin-like_sf"/>
</dbReference>
<dbReference type="InterPro" id="IPR012128">
    <property type="entry name" value="Phycobilisome_asu/bsu"/>
</dbReference>
<dbReference type="InterPro" id="IPR038719">
    <property type="entry name" value="Phycobilisome_asu/bsu_sf"/>
</dbReference>
<dbReference type="PANTHER" id="PTHR34011:SF7">
    <property type="entry name" value="C-PHYCOCYANIN BETA SUBUNIT"/>
    <property type="match status" value="1"/>
</dbReference>
<dbReference type="PANTHER" id="PTHR34011">
    <property type="entry name" value="PHYCOBILISOME 32.1 KDA LINKER POLYPEPTIDE, PHYCOCYANIN-ASSOCIATED, ROD 2-RELATED"/>
    <property type="match status" value="1"/>
</dbReference>
<dbReference type="Pfam" id="PF00502">
    <property type="entry name" value="Phycobilisome"/>
    <property type="match status" value="1"/>
</dbReference>
<dbReference type="PIRSF" id="PIRSF000081">
    <property type="entry name" value="Phycocyanin"/>
    <property type="match status" value="1"/>
</dbReference>
<dbReference type="SUPFAM" id="SSF46458">
    <property type="entry name" value="Globin-like"/>
    <property type="match status" value="1"/>
</dbReference>
<evidence type="ECO:0000250" key="1"/>
<evidence type="ECO:0000305" key="2"/>
<proteinExistence type="inferred from homology"/>
<accession>P28560</accession>
<organism>
    <name type="scientific">Aglaothamnion neglectum</name>
    <name type="common">Red alga</name>
    <dbReference type="NCBI Taxonomy" id="2765"/>
    <lineage>
        <taxon>Eukaryota</taxon>
        <taxon>Rhodophyta</taxon>
        <taxon>Florideophyceae</taxon>
        <taxon>Rhodymeniophycidae</taxon>
        <taxon>Ceramiales</taxon>
        <taxon>Callithamniaceae</taxon>
        <taxon>Aglaothamnion</taxon>
    </lineage>
</organism>
<sequence>MLDAFSKVVIQSDAKAAYIGGSDLTALKTFISEGNKRLDSVNYIASNASCIVSDAVSGMICENPGLIAAGGNCYTNRRMAACLRDGEIILRYVSYALLAGDSSVLEDRCLNGLKETYIALGVPTNSTARAVAIMKAAAVAFVTNTASQRKVEVAAGDCSALAAEVGTYFDKVESSI</sequence>
<geneLocation type="chloroplast"/>
<reference key="1">
    <citation type="journal article" date="1993" name="Plant Mol. Biol.">
        <title>Characterization and transcript analysis of the major phycobiliprotein subunit genes from Aglaothamnion neglectum (Rhodophyta).</title>
        <authorList>
            <person name="Apt K.E."/>
            <person name="Grossman A.R."/>
        </authorList>
    </citation>
    <scope>NUCLEOTIDE SEQUENCE [GENOMIC DNA]</scope>
</reference>
<protein>
    <recommendedName>
        <fullName>R-phycoerythrin beta chain</fullName>
    </recommendedName>
</protein>
<feature type="chain" id="PRO_0000199189" description="R-phycoerythrin beta chain">
    <location>
        <begin position="1"/>
        <end position="176"/>
    </location>
</feature>
<feature type="binding site" description="covalent" evidence="1">
    <location>
        <position position="50"/>
    </location>
    <ligand>
        <name>phycourobilin</name>
        <dbReference type="ChEBI" id="CHEBI:189062"/>
    </ligand>
</feature>
<feature type="binding site" description="covalent" evidence="1">
    <location>
        <position position="61"/>
    </location>
    <ligand>
        <name>phycourobilin</name>
        <dbReference type="ChEBI" id="CHEBI:189062"/>
    </ligand>
</feature>
<feature type="binding site" description="covalent" evidence="1">
    <location>
        <position position="82"/>
    </location>
    <ligand>
        <name>(2R,3E)-phycoerythrobilin</name>
        <dbReference type="ChEBI" id="CHEBI:85276"/>
        <label>1</label>
    </ligand>
</feature>
<feature type="binding site" description="covalent" evidence="1">
    <location>
        <position position="158"/>
    </location>
    <ligand>
        <name>(2R,3E)-phycoerythrobilin</name>
        <dbReference type="ChEBI" id="CHEBI:85276"/>
        <label>2</label>
    </ligand>
</feature>
<feature type="modified residue" description="N4-methylasparagine" evidence="1">
    <location>
        <position position="72"/>
    </location>
</feature>
<keyword id="KW-0042">Antenna complex</keyword>
<keyword id="KW-0089">Bile pigment</keyword>
<keyword id="KW-0150">Chloroplast</keyword>
<keyword id="KW-0157">Chromophore</keyword>
<keyword id="KW-0249">Electron transport</keyword>
<keyword id="KW-0472">Membrane</keyword>
<keyword id="KW-0488">Methylation</keyword>
<keyword id="KW-0602">Photosynthesis</keyword>
<keyword id="KW-0605">Phycobilisome</keyword>
<keyword id="KW-0934">Plastid</keyword>
<keyword id="KW-0793">Thylakoid</keyword>
<keyword id="KW-0813">Transport</keyword>
<gene>
    <name type="primary">cpeB</name>
    <name type="synonym">rpeB</name>
</gene>